<comment type="function">
    <text evidence="1 4">Involved in the synthesis of both tocopherols and tocotrienols (vitamin E), which presumably protect photosynthetic complexes from oxidative stress. Catalyzes the conversion of 2-methyl-6-phytyl-1,4-hydroquinone and 2,3-dimethyl-5-phytyl-1,4-hydroquinone (DMPQ) to delta- and gamma-tocopherol respectively. Also converts 2,3-dimethyl-5-geranylgeranyl-1,4-hydroquinone (DMGQ) to gamma-tocotrienol (By similarity).</text>
</comment>
<comment type="pathway">
    <text>Cofactor biosynthesis; tocopherol biosynthesis.</text>
</comment>
<comment type="subcellular location">
    <subcellularLocation>
        <location evidence="1">Plastid</location>
        <location evidence="1">Chloroplast</location>
        <location evidence="1">Plastoglobule</location>
    </subcellularLocation>
</comment>
<comment type="tissue specificity">
    <text evidence="4">Expressed in the roots, stems, leaves and spikelets.</text>
</comment>
<comment type="induction">
    <text evidence="4">By salt and drougt stresses, H(2)O(2), salicylic acid (SA) and abscisic acid (ABA).</text>
</comment>
<comment type="miscellaneous">
    <text>Plants overexpressing VTE1 show increased tolerance to salt stress with reduced H(2)O(2) levels. Plants silencing VTE1 show enhanced sensitivity to salt stress with increased H(2)O(2) levels.</text>
</comment>
<comment type="sequence caution" evidence="5">
    <conflict type="erroneous gene model prediction">
        <sequence resource="EMBL-CDS" id="BAD21817"/>
    </conflict>
</comment>
<comment type="sequence caution" evidence="5">
    <conflict type="erroneous gene model prediction">
        <sequence resource="EMBL-CDS" id="BAD28674"/>
    </conflict>
</comment>
<name>TOCC_ORYSJ</name>
<gene>
    <name type="primary">VTE1</name>
    <name type="ordered locus">Os02g0276500</name>
    <name type="ordered locus">LOC_Os02g17650</name>
    <name type="ORF">OsJ_06237</name>
    <name type="ORF">OSJNBa0055M07.5</name>
    <name type="ORF">P0017G06.29</name>
</gene>
<evidence type="ECO:0000250" key="1"/>
<evidence type="ECO:0000255" key="2"/>
<evidence type="ECO:0000256" key="3">
    <source>
        <dbReference type="SAM" id="MobiDB-lite"/>
    </source>
</evidence>
<evidence type="ECO:0000269" key="4">
    <source>
    </source>
</evidence>
<evidence type="ECO:0000305" key="5"/>
<accession>Q6K7V6</accession>
<accession>A0A0P0VHH9</accession>
<accession>Q6K7V5</accession>
<reference key="1">
    <citation type="journal article" date="2005" name="Nature">
        <title>The map-based sequence of the rice genome.</title>
        <authorList>
            <consortium name="International rice genome sequencing project (IRGSP)"/>
        </authorList>
    </citation>
    <scope>NUCLEOTIDE SEQUENCE [LARGE SCALE GENOMIC DNA]</scope>
    <source>
        <strain>cv. Nipponbare</strain>
    </source>
</reference>
<reference key="2">
    <citation type="journal article" date="2008" name="Nucleic Acids Res.">
        <title>The rice annotation project database (RAP-DB): 2008 update.</title>
        <authorList>
            <consortium name="The rice annotation project (RAP)"/>
        </authorList>
    </citation>
    <scope>GENOME REANNOTATION</scope>
    <source>
        <strain>cv. Nipponbare</strain>
    </source>
</reference>
<reference key="3">
    <citation type="journal article" date="2013" name="Rice">
        <title>Improvement of the Oryza sativa Nipponbare reference genome using next generation sequence and optical map data.</title>
        <authorList>
            <person name="Kawahara Y."/>
            <person name="de la Bastide M."/>
            <person name="Hamilton J.P."/>
            <person name="Kanamori H."/>
            <person name="McCombie W.R."/>
            <person name="Ouyang S."/>
            <person name="Schwartz D.C."/>
            <person name="Tanaka T."/>
            <person name="Wu J."/>
            <person name="Zhou S."/>
            <person name="Childs K.L."/>
            <person name="Davidson R.M."/>
            <person name="Lin H."/>
            <person name="Quesada-Ocampo L."/>
            <person name="Vaillancourt B."/>
            <person name="Sakai H."/>
            <person name="Lee S.S."/>
            <person name="Kim J."/>
            <person name="Numa H."/>
            <person name="Itoh T."/>
            <person name="Buell C.R."/>
            <person name="Matsumoto T."/>
        </authorList>
    </citation>
    <scope>GENOME REANNOTATION</scope>
    <source>
        <strain>cv. Nipponbare</strain>
    </source>
</reference>
<reference key="4">
    <citation type="journal article" date="2005" name="PLoS Biol.">
        <title>The genomes of Oryza sativa: a history of duplications.</title>
        <authorList>
            <person name="Yu J."/>
            <person name="Wang J."/>
            <person name="Lin W."/>
            <person name="Li S."/>
            <person name="Li H."/>
            <person name="Zhou J."/>
            <person name="Ni P."/>
            <person name="Dong W."/>
            <person name="Hu S."/>
            <person name="Zeng C."/>
            <person name="Zhang J."/>
            <person name="Zhang Y."/>
            <person name="Li R."/>
            <person name="Xu Z."/>
            <person name="Li S."/>
            <person name="Li X."/>
            <person name="Zheng H."/>
            <person name="Cong L."/>
            <person name="Lin L."/>
            <person name="Yin J."/>
            <person name="Geng J."/>
            <person name="Li G."/>
            <person name="Shi J."/>
            <person name="Liu J."/>
            <person name="Lv H."/>
            <person name="Li J."/>
            <person name="Wang J."/>
            <person name="Deng Y."/>
            <person name="Ran L."/>
            <person name="Shi X."/>
            <person name="Wang X."/>
            <person name="Wu Q."/>
            <person name="Li C."/>
            <person name="Ren X."/>
            <person name="Wang J."/>
            <person name="Wang X."/>
            <person name="Li D."/>
            <person name="Liu D."/>
            <person name="Zhang X."/>
            <person name="Ji Z."/>
            <person name="Zhao W."/>
            <person name="Sun Y."/>
            <person name="Zhang Z."/>
            <person name="Bao J."/>
            <person name="Han Y."/>
            <person name="Dong L."/>
            <person name="Ji J."/>
            <person name="Chen P."/>
            <person name="Wu S."/>
            <person name="Liu J."/>
            <person name="Xiao Y."/>
            <person name="Bu D."/>
            <person name="Tan J."/>
            <person name="Yang L."/>
            <person name="Ye C."/>
            <person name="Zhang J."/>
            <person name="Xu J."/>
            <person name="Zhou Y."/>
            <person name="Yu Y."/>
            <person name="Zhang B."/>
            <person name="Zhuang S."/>
            <person name="Wei H."/>
            <person name="Liu B."/>
            <person name="Lei M."/>
            <person name="Yu H."/>
            <person name="Li Y."/>
            <person name="Xu H."/>
            <person name="Wei S."/>
            <person name="He X."/>
            <person name="Fang L."/>
            <person name="Zhang Z."/>
            <person name="Zhang Y."/>
            <person name="Huang X."/>
            <person name="Su Z."/>
            <person name="Tong W."/>
            <person name="Li J."/>
            <person name="Tong Z."/>
            <person name="Li S."/>
            <person name="Ye J."/>
            <person name="Wang L."/>
            <person name="Fang L."/>
            <person name="Lei T."/>
            <person name="Chen C.-S."/>
            <person name="Chen H.-C."/>
            <person name="Xu Z."/>
            <person name="Li H."/>
            <person name="Huang H."/>
            <person name="Zhang F."/>
            <person name="Xu H."/>
            <person name="Li N."/>
            <person name="Zhao C."/>
            <person name="Li S."/>
            <person name="Dong L."/>
            <person name="Huang Y."/>
            <person name="Li L."/>
            <person name="Xi Y."/>
            <person name="Qi Q."/>
            <person name="Li W."/>
            <person name="Zhang B."/>
            <person name="Hu W."/>
            <person name="Zhang Y."/>
            <person name="Tian X."/>
            <person name="Jiao Y."/>
            <person name="Liang X."/>
            <person name="Jin J."/>
            <person name="Gao L."/>
            <person name="Zheng W."/>
            <person name="Hao B."/>
            <person name="Liu S.-M."/>
            <person name="Wang W."/>
            <person name="Yuan L."/>
            <person name="Cao M."/>
            <person name="McDermott J."/>
            <person name="Samudrala R."/>
            <person name="Wang J."/>
            <person name="Wong G.K.-S."/>
            <person name="Yang H."/>
        </authorList>
    </citation>
    <scope>NUCLEOTIDE SEQUENCE [LARGE SCALE GENOMIC DNA]</scope>
    <source>
        <strain>cv. Nipponbare</strain>
    </source>
</reference>
<reference key="5">
    <citation type="journal article" date="2003" name="Science">
        <title>Collection, mapping, and annotation of over 28,000 cDNA clones from japonica rice.</title>
        <authorList>
            <consortium name="The rice full-length cDNA consortium"/>
        </authorList>
    </citation>
    <scope>NUCLEOTIDE SEQUENCE [LARGE SCALE MRNA]</scope>
    <source>
        <strain>cv. Nipponbare</strain>
    </source>
</reference>
<reference key="6">
    <citation type="journal article" date="2011" name="Sci. China Life Sci.">
        <title>The role of tocopherol cyclase in salt stress tolerance of rice (Oryza sativa).</title>
        <authorList>
            <person name="Ouyang S."/>
            <person name="He S."/>
            <person name="Liu P."/>
            <person name="Zhang W."/>
            <person name="Zhang J."/>
            <person name="Chen S."/>
        </authorList>
    </citation>
    <scope>FUNCTION</scope>
    <scope>TISSUE SPECIFICITY</scope>
    <scope>INDUCTION</scope>
    <source>
        <strain>cv. Taipei 309</strain>
    </source>
</reference>
<dbReference type="EMBL" id="AP004770">
    <property type="protein sequence ID" value="BAD21816.1"/>
    <property type="molecule type" value="Genomic_DNA"/>
</dbReference>
<dbReference type="EMBL" id="AP004770">
    <property type="protein sequence ID" value="BAD21817.1"/>
    <property type="status" value="ALT_SEQ"/>
    <property type="molecule type" value="Genomic_DNA"/>
</dbReference>
<dbReference type="EMBL" id="AP005536">
    <property type="protein sequence ID" value="BAD28673.1"/>
    <property type="molecule type" value="Genomic_DNA"/>
</dbReference>
<dbReference type="EMBL" id="AP005536">
    <property type="protein sequence ID" value="BAD28674.1"/>
    <property type="status" value="ALT_SEQ"/>
    <property type="molecule type" value="Genomic_DNA"/>
</dbReference>
<dbReference type="EMBL" id="AP008208">
    <property type="protein sequence ID" value="BAF08459.1"/>
    <property type="molecule type" value="Genomic_DNA"/>
</dbReference>
<dbReference type="EMBL" id="AP014958">
    <property type="protein sequence ID" value="BAS78094.1"/>
    <property type="molecule type" value="Genomic_DNA"/>
</dbReference>
<dbReference type="EMBL" id="CM000139">
    <property type="protein sequence ID" value="EEE56731.1"/>
    <property type="molecule type" value="Genomic_DNA"/>
</dbReference>
<dbReference type="EMBL" id="AK072052">
    <property type="protein sequence ID" value="BAG92802.1"/>
    <property type="molecule type" value="mRNA"/>
</dbReference>
<dbReference type="RefSeq" id="XP_015626329.1">
    <property type="nucleotide sequence ID" value="XM_015770843.1"/>
</dbReference>
<dbReference type="FunCoup" id="Q6K7V6">
    <property type="interactions" value="416"/>
</dbReference>
<dbReference type="STRING" id="39947.Q6K7V6"/>
<dbReference type="PaxDb" id="39947-Q6K7V6"/>
<dbReference type="EnsemblPlants" id="Os02t0276500-01">
    <property type="protein sequence ID" value="Os02t0276500-01"/>
    <property type="gene ID" value="Os02g0276500"/>
</dbReference>
<dbReference type="Gramene" id="Os02t0276500-01">
    <property type="protein sequence ID" value="Os02t0276500-01"/>
    <property type="gene ID" value="Os02g0276500"/>
</dbReference>
<dbReference type="KEGG" id="dosa:Os02g0276500"/>
<dbReference type="eggNOG" id="ENOG502QQ9P">
    <property type="taxonomic scope" value="Eukaryota"/>
</dbReference>
<dbReference type="HOGENOM" id="CLU_048962_0_0_1"/>
<dbReference type="InParanoid" id="Q6K7V6"/>
<dbReference type="OMA" id="PHSGYHW"/>
<dbReference type="OrthoDB" id="38968at2759"/>
<dbReference type="PlantReactome" id="R-OSA-1119287">
    <property type="pathway name" value="Vitamin E biosynthesis"/>
</dbReference>
<dbReference type="UniPathway" id="UPA00160"/>
<dbReference type="Proteomes" id="UP000000763">
    <property type="component" value="Chromosome 2"/>
</dbReference>
<dbReference type="Proteomes" id="UP000007752">
    <property type="component" value="Chromosome 2"/>
</dbReference>
<dbReference type="Proteomes" id="UP000059680">
    <property type="component" value="Chromosome 2"/>
</dbReference>
<dbReference type="GO" id="GO:0010287">
    <property type="term" value="C:plastoglobule"/>
    <property type="evidence" value="ECO:0007669"/>
    <property type="project" value="UniProtKB-SubCell"/>
</dbReference>
<dbReference type="GO" id="GO:0009976">
    <property type="term" value="F:tocopherol cyclase activity"/>
    <property type="evidence" value="ECO:0007669"/>
    <property type="project" value="InterPro"/>
</dbReference>
<dbReference type="GO" id="GO:0006979">
    <property type="term" value="P:response to oxidative stress"/>
    <property type="evidence" value="ECO:0000315"/>
    <property type="project" value="UniProtKB"/>
</dbReference>
<dbReference type="GO" id="GO:0009651">
    <property type="term" value="P:response to salt stress"/>
    <property type="evidence" value="ECO:0000315"/>
    <property type="project" value="UniProtKB"/>
</dbReference>
<dbReference type="GO" id="GO:0010189">
    <property type="term" value="P:vitamin E biosynthetic process"/>
    <property type="evidence" value="ECO:0007669"/>
    <property type="project" value="UniProtKB-UniPathway"/>
</dbReference>
<dbReference type="InterPro" id="IPR025893">
    <property type="entry name" value="Tocopherol_cyclase"/>
</dbReference>
<dbReference type="PANTHER" id="PTHR35309">
    <property type="match status" value="1"/>
</dbReference>
<dbReference type="PANTHER" id="PTHR35309:SF2">
    <property type="entry name" value="TOCOPHEROL CYCLASE, CHLOROPLASTIC"/>
    <property type="match status" value="1"/>
</dbReference>
<dbReference type="Pfam" id="PF14249">
    <property type="entry name" value="Tocopherol_cycl"/>
    <property type="match status" value="1"/>
</dbReference>
<organism>
    <name type="scientific">Oryza sativa subsp. japonica</name>
    <name type="common">Rice</name>
    <dbReference type="NCBI Taxonomy" id="39947"/>
    <lineage>
        <taxon>Eukaryota</taxon>
        <taxon>Viridiplantae</taxon>
        <taxon>Streptophyta</taxon>
        <taxon>Embryophyta</taxon>
        <taxon>Tracheophyta</taxon>
        <taxon>Spermatophyta</taxon>
        <taxon>Magnoliopsida</taxon>
        <taxon>Liliopsida</taxon>
        <taxon>Poales</taxon>
        <taxon>Poaceae</taxon>
        <taxon>BOP clade</taxon>
        <taxon>Oryzoideae</taxon>
        <taxon>Oryzeae</taxon>
        <taxon>Oryzinae</taxon>
        <taxon>Oryza</taxon>
        <taxon>Oryza sativa</taxon>
    </lineage>
</organism>
<protein>
    <recommendedName>
        <fullName>Probable tocopherol cyclase, chloroplastic</fullName>
    </recommendedName>
    <alternativeName>
        <fullName>Vitamin E pathway gene 1 protein</fullName>
    </alternativeName>
</protein>
<keyword id="KW-0150">Chloroplast</keyword>
<keyword id="KW-0934">Plastid</keyword>
<keyword id="KW-1185">Reference proteome</keyword>
<keyword id="KW-0809">Transit peptide</keyword>
<sequence>MDLAAAAVAVSFPRPAPPPRRCAPRRHRRALAPRAASSSPSPSTAVAAPVYAPTPRDRALRTPHSGYHYDGTARPFFEGWYFKVSIPECRQSFCFMYSVENPLFRDGMSDLDRVIHGSRFTGVGAQILGADDKYICQFTEKSNNFWGSRHELMLGNTFIPNNGSTPPEGEVPPQEFSSRVLEGFQVTPIWHQGFIRDDGRSKYVPNVQTARWEYSTRPVYGWGDVTSKQKSTAGWLAAFPFFEPHWQICMAGGLSTGWIEWDGERFEFENAPSYSEKNWGAGFPRKWYWVQCNVFSGASGEVALTAAGGLRKIGLGETYESPSLIGIHYEGKFYEFVPWTGTVSWDIAPWGHWKLSGENKNHLVEIEATTKEPGTALRAPTMEAGLVPACKDTCYGDLRLQMWEKRNDGGKGKMILDATSNMAALEVGGGPWFNGWKGTTVSNEIVNNVVGTQVDVESLFPIPFLKPPGL</sequence>
<feature type="transit peptide" description="Chloroplast" evidence="2">
    <location>
        <begin position="1"/>
        <end position="61"/>
    </location>
</feature>
<feature type="chain" id="PRO_0000409872" description="Probable tocopherol cyclase, chloroplastic">
    <location>
        <begin position="62"/>
        <end position="470"/>
    </location>
</feature>
<feature type="region of interest" description="Disordered" evidence="3">
    <location>
        <begin position="14"/>
        <end position="48"/>
    </location>
</feature>
<feature type="compositionally biased region" description="Basic residues" evidence="3">
    <location>
        <begin position="22"/>
        <end position="31"/>
    </location>
</feature>
<feature type="compositionally biased region" description="Low complexity" evidence="3">
    <location>
        <begin position="32"/>
        <end position="48"/>
    </location>
</feature>
<proteinExistence type="evidence at transcript level"/>